<organism>
    <name type="scientific">Neisseria gonorrhoeae (strain NCCP11945)</name>
    <dbReference type="NCBI Taxonomy" id="521006"/>
    <lineage>
        <taxon>Bacteria</taxon>
        <taxon>Pseudomonadati</taxon>
        <taxon>Pseudomonadota</taxon>
        <taxon>Betaproteobacteria</taxon>
        <taxon>Neisseriales</taxon>
        <taxon>Neisseriaceae</taxon>
        <taxon>Neisseria</taxon>
    </lineage>
</organism>
<reference key="1">
    <citation type="journal article" date="2008" name="J. Bacteriol.">
        <title>Complete genome sequence of Neisseria gonorrhoeae NCCP11945.</title>
        <authorList>
            <person name="Chung G.T."/>
            <person name="Yoo J.S."/>
            <person name="Oh H.B."/>
            <person name="Lee Y.S."/>
            <person name="Cha S.H."/>
            <person name="Kim S.J."/>
            <person name="Yoo C.K."/>
        </authorList>
    </citation>
    <scope>NUCLEOTIDE SEQUENCE [LARGE SCALE GENOMIC DNA]</scope>
    <source>
        <strain>NCCP11945</strain>
    </source>
</reference>
<gene>
    <name evidence="1" type="primary">pgk</name>
    <name type="ordered locus">NGK_2334</name>
</gene>
<protein>
    <recommendedName>
        <fullName evidence="1">Phosphoglycerate kinase</fullName>
        <ecNumber evidence="1">2.7.2.3</ecNumber>
    </recommendedName>
</protein>
<proteinExistence type="inferred from homology"/>
<evidence type="ECO:0000255" key="1">
    <source>
        <dbReference type="HAMAP-Rule" id="MF_00145"/>
    </source>
</evidence>
<dbReference type="EC" id="2.7.2.3" evidence="1"/>
<dbReference type="EMBL" id="CP001050">
    <property type="protein sequence ID" value="ACF30938.1"/>
    <property type="molecule type" value="Genomic_DNA"/>
</dbReference>
<dbReference type="RefSeq" id="WP_012504023.1">
    <property type="nucleotide sequence ID" value="NC_011035.1"/>
</dbReference>
<dbReference type="SMR" id="B4RPR1"/>
<dbReference type="KEGG" id="ngk:NGK_2334"/>
<dbReference type="HOGENOM" id="CLU_025427_0_2_4"/>
<dbReference type="UniPathway" id="UPA00109">
    <property type="reaction ID" value="UER00185"/>
</dbReference>
<dbReference type="Proteomes" id="UP000002564">
    <property type="component" value="Chromosome"/>
</dbReference>
<dbReference type="GO" id="GO:0005829">
    <property type="term" value="C:cytosol"/>
    <property type="evidence" value="ECO:0007669"/>
    <property type="project" value="TreeGrafter"/>
</dbReference>
<dbReference type="GO" id="GO:0043531">
    <property type="term" value="F:ADP binding"/>
    <property type="evidence" value="ECO:0007669"/>
    <property type="project" value="TreeGrafter"/>
</dbReference>
<dbReference type="GO" id="GO:0005524">
    <property type="term" value="F:ATP binding"/>
    <property type="evidence" value="ECO:0007669"/>
    <property type="project" value="UniProtKB-KW"/>
</dbReference>
<dbReference type="GO" id="GO:0004618">
    <property type="term" value="F:phosphoglycerate kinase activity"/>
    <property type="evidence" value="ECO:0007669"/>
    <property type="project" value="UniProtKB-UniRule"/>
</dbReference>
<dbReference type="GO" id="GO:0006094">
    <property type="term" value="P:gluconeogenesis"/>
    <property type="evidence" value="ECO:0007669"/>
    <property type="project" value="TreeGrafter"/>
</dbReference>
<dbReference type="GO" id="GO:0006096">
    <property type="term" value="P:glycolytic process"/>
    <property type="evidence" value="ECO:0007669"/>
    <property type="project" value="UniProtKB-UniRule"/>
</dbReference>
<dbReference type="FunFam" id="3.40.50.1260:FF:000001">
    <property type="entry name" value="Phosphoglycerate kinase"/>
    <property type="match status" value="1"/>
</dbReference>
<dbReference type="FunFam" id="3.40.50.1260:FF:000002">
    <property type="entry name" value="Phosphoglycerate kinase"/>
    <property type="match status" value="1"/>
</dbReference>
<dbReference type="Gene3D" id="3.40.50.1260">
    <property type="entry name" value="Phosphoglycerate kinase, N-terminal domain"/>
    <property type="match status" value="2"/>
</dbReference>
<dbReference type="HAMAP" id="MF_00145">
    <property type="entry name" value="Phosphoglyc_kinase"/>
    <property type="match status" value="1"/>
</dbReference>
<dbReference type="InterPro" id="IPR001576">
    <property type="entry name" value="Phosphoglycerate_kinase"/>
</dbReference>
<dbReference type="InterPro" id="IPR015911">
    <property type="entry name" value="Phosphoglycerate_kinase_CS"/>
</dbReference>
<dbReference type="InterPro" id="IPR015824">
    <property type="entry name" value="Phosphoglycerate_kinase_N"/>
</dbReference>
<dbReference type="InterPro" id="IPR036043">
    <property type="entry name" value="Phosphoglycerate_kinase_sf"/>
</dbReference>
<dbReference type="PANTHER" id="PTHR11406">
    <property type="entry name" value="PHOSPHOGLYCERATE KINASE"/>
    <property type="match status" value="1"/>
</dbReference>
<dbReference type="PANTHER" id="PTHR11406:SF23">
    <property type="entry name" value="PHOSPHOGLYCERATE KINASE 1, CHLOROPLASTIC-RELATED"/>
    <property type="match status" value="1"/>
</dbReference>
<dbReference type="Pfam" id="PF00162">
    <property type="entry name" value="PGK"/>
    <property type="match status" value="1"/>
</dbReference>
<dbReference type="PIRSF" id="PIRSF000724">
    <property type="entry name" value="Pgk"/>
    <property type="match status" value="1"/>
</dbReference>
<dbReference type="PRINTS" id="PR00477">
    <property type="entry name" value="PHGLYCKINASE"/>
</dbReference>
<dbReference type="SUPFAM" id="SSF53748">
    <property type="entry name" value="Phosphoglycerate kinase"/>
    <property type="match status" value="1"/>
</dbReference>
<dbReference type="PROSITE" id="PS00111">
    <property type="entry name" value="PGLYCERATE_KINASE"/>
    <property type="match status" value="1"/>
</dbReference>
<keyword id="KW-0067">ATP-binding</keyword>
<keyword id="KW-0963">Cytoplasm</keyword>
<keyword id="KW-0324">Glycolysis</keyword>
<keyword id="KW-0418">Kinase</keyword>
<keyword id="KW-0547">Nucleotide-binding</keyword>
<keyword id="KW-0808">Transferase</keyword>
<sequence>MAFLKLTEQNVRGKTVLIRADMNVPFKGGKISDDTRIRASLASVKYCLDNGASVIVMTHLGRPTEGEFHPEDDVAPVAAHLGGLLGKDVKVLNDWRENKPALNAGDVVMLQNVRINKGEKKNDLELGKAYAALCDVFVNDAFGTAHRAQASTEAVAQAAPVACAGVLMAGELDALGKALKQPARPMVAIVAGSKVSTKLTILESLADKVDQLIVGGGIANTFLLAEGKAIGKSLAEHDLVEESKKIMAKMAAKGGSVPLPTDVVVAKAFAADAEAVVKDIADVAEDEMILDIGPKSAAALAELLKAAGTVVWNGPVGVFEFDQFAGGTKALAEAIAQSKAFSIAGGGDTLAAIAKFGVTEQIGYISTGGGAFLEFLEGKELPAVAALEKTRRVNGLI</sequence>
<name>PGK_NEIG2</name>
<comment type="catalytic activity">
    <reaction evidence="1">
        <text>(2R)-3-phosphoglycerate + ATP = (2R)-3-phospho-glyceroyl phosphate + ADP</text>
        <dbReference type="Rhea" id="RHEA:14801"/>
        <dbReference type="ChEBI" id="CHEBI:30616"/>
        <dbReference type="ChEBI" id="CHEBI:57604"/>
        <dbReference type="ChEBI" id="CHEBI:58272"/>
        <dbReference type="ChEBI" id="CHEBI:456216"/>
        <dbReference type="EC" id="2.7.2.3"/>
    </reaction>
</comment>
<comment type="pathway">
    <text evidence="1">Carbohydrate degradation; glycolysis; pyruvate from D-glyceraldehyde 3-phosphate: step 2/5.</text>
</comment>
<comment type="subunit">
    <text evidence="1">Monomer.</text>
</comment>
<comment type="subcellular location">
    <subcellularLocation>
        <location evidence="1">Cytoplasm</location>
    </subcellularLocation>
</comment>
<comment type="similarity">
    <text evidence="1">Belongs to the phosphoglycerate kinase family.</text>
</comment>
<accession>B4RPR1</accession>
<feature type="chain" id="PRO_1000096359" description="Phosphoglycerate kinase">
    <location>
        <begin position="1"/>
        <end position="397"/>
    </location>
</feature>
<feature type="binding site" evidence="1">
    <location>
        <begin position="21"/>
        <end position="23"/>
    </location>
    <ligand>
        <name>substrate</name>
    </ligand>
</feature>
<feature type="binding site" evidence="1">
    <location>
        <position position="36"/>
    </location>
    <ligand>
        <name>substrate</name>
    </ligand>
</feature>
<feature type="binding site" evidence="1">
    <location>
        <begin position="59"/>
        <end position="62"/>
    </location>
    <ligand>
        <name>substrate</name>
    </ligand>
</feature>
<feature type="binding site" evidence="1">
    <location>
        <position position="114"/>
    </location>
    <ligand>
        <name>substrate</name>
    </ligand>
</feature>
<feature type="binding site" evidence="1">
    <location>
        <position position="147"/>
    </location>
    <ligand>
        <name>substrate</name>
    </ligand>
</feature>
<feature type="binding site" evidence="1">
    <location>
        <position position="198"/>
    </location>
    <ligand>
        <name>ATP</name>
        <dbReference type="ChEBI" id="CHEBI:30616"/>
    </ligand>
</feature>
<feature type="binding site" evidence="1">
    <location>
        <position position="320"/>
    </location>
    <ligand>
        <name>ATP</name>
        <dbReference type="ChEBI" id="CHEBI:30616"/>
    </ligand>
</feature>
<feature type="binding site" evidence="1">
    <location>
        <begin position="346"/>
        <end position="349"/>
    </location>
    <ligand>
        <name>ATP</name>
        <dbReference type="ChEBI" id="CHEBI:30616"/>
    </ligand>
</feature>